<organism>
    <name type="scientific">Haemophilus influenzae (strain ATCC 51907 / DSM 11121 / KW20 / Rd)</name>
    <dbReference type="NCBI Taxonomy" id="71421"/>
    <lineage>
        <taxon>Bacteria</taxon>
        <taxon>Pseudomonadati</taxon>
        <taxon>Pseudomonadota</taxon>
        <taxon>Gammaproteobacteria</taxon>
        <taxon>Pasteurellales</taxon>
        <taxon>Pasteurellaceae</taxon>
        <taxon>Haemophilus</taxon>
    </lineage>
</organism>
<keyword id="KW-0269">Exonuclease</keyword>
<keyword id="KW-0378">Hydrolase</keyword>
<keyword id="KW-0460">Magnesium</keyword>
<keyword id="KW-0479">Metal-binding</keyword>
<keyword id="KW-0540">Nuclease</keyword>
<keyword id="KW-1185">Reference proteome</keyword>
<keyword id="KW-0819">tRNA processing</keyword>
<name>RNT_HAEIN</name>
<feature type="chain" id="PRO_0000208964" description="Ribonuclease T">
    <location>
        <begin position="1"/>
        <end position="229"/>
    </location>
</feature>
<feature type="domain" description="Exonuclease" evidence="1">
    <location>
        <begin position="23"/>
        <end position="197"/>
    </location>
</feature>
<feature type="active site" description="Proton donor/acceptor" evidence="1">
    <location>
        <position position="184"/>
    </location>
</feature>
<feature type="binding site" evidence="1">
    <location>
        <position position="26"/>
    </location>
    <ligand>
        <name>Mg(2+)</name>
        <dbReference type="ChEBI" id="CHEBI:18420"/>
        <label>1</label>
        <note>catalytic</note>
    </ligand>
</feature>
<feature type="binding site" evidence="1">
    <location>
        <position position="26"/>
    </location>
    <ligand>
        <name>Mg(2+)</name>
        <dbReference type="ChEBI" id="CHEBI:18420"/>
        <label>2</label>
        <note>catalytic</note>
    </ligand>
</feature>
<feature type="binding site" evidence="1">
    <location>
        <position position="28"/>
    </location>
    <ligand>
        <name>Mg(2+)</name>
        <dbReference type="ChEBI" id="CHEBI:18420"/>
        <label>2</label>
        <note>catalytic</note>
    </ligand>
</feature>
<feature type="binding site" evidence="1">
    <location>
        <position position="184"/>
    </location>
    <ligand>
        <name>Mg(2+)</name>
        <dbReference type="ChEBI" id="CHEBI:18420"/>
        <label>2</label>
        <note>catalytic</note>
    </ligand>
</feature>
<feature type="binding site" evidence="1">
    <location>
        <position position="189"/>
    </location>
    <ligand>
        <name>Mg(2+)</name>
        <dbReference type="ChEBI" id="CHEBI:18420"/>
        <label>2</label>
        <note>catalytic</note>
    </ligand>
</feature>
<feature type="site" description="Important for substrate binding and specificity" evidence="1">
    <location>
        <position position="32"/>
    </location>
</feature>
<feature type="site" description="Important for substrate binding and specificity" evidence="1">
    <location>
        <position position="80"/>
    </location>
</feature>
<feature type="site" description="Important for substrate binding and specificity" evidence="1">
    <location>
        <position position="127"/>
    </location>
</feature>
<feature type="site" description="Important for substrate binding and specificity" evidence="1">
    <location>
        <position position="149"/>
    </location>
</feature>
<evidence type="ECO:0000255" key="1">
    <source>
        <dbReference type="HAMAP-Rule" id="MF_00157"/>
    </source>
</evidence>
<reference key="1">
    <citation type="journal article" date="1995" name="Science">
        <title>Whole-genome random sequencing and assembly of Haemophilus influenzae Rd.</title>
        <authorList>
            <person name="Fleischmann R.D."/>
            <person name="Adams M.D."/>
            <person name="White O."/>
            <person name="Clayton R.A."/>
            <person name="Kirkness E.F."/>
            <person name="Kerlavage A.R."/>
            <person name="Bult C.J."/>
            <person name="Tomb J.-F."/>
            <person name="Dougherty B.A."/>
            <person name="Merrick J.M."/>
            <person name="McKenney K."/>
            <person name="Sutton G.G."/>
            <person name="FitzHugh W."/>
            <person name="Fields C.A."/>
            <person name="Gocayne J.D."/>
            <person name="Scott J.D."/>
            <person name="Shirley R."/>
            <person name="Liu L.-I."/>
            <person name="Glodek A."/>
            <person name="Kelley J.M."/>
            <person name="Weidman J.F."/>
            <person name="Phillips C.A."/>
            <person name="Spriggs T."/>
            <person name="Hedblom E."/>
            <person name="Cotton M.D."/>
            <person name="Utterback T.R."/>
            <person name="Hanna M.C."/>
            <person name="Nguyen D.T."/>
            <person name="Saudek D.M."/>
            <person name="Brandon R.C."/>
            <person name="Fine L.D."/>
            <person name="Fritchman J.L."/>
            <person name="Fuhrmann J.L."/>
            <person name="Geoghagen N.S.M."/>
            <person name="Gnehm C.L."/>
            <person name="McDonald L.A."/>
            <person name="Small K.V."/>
            <person name="Fraser C.M."/>
            <person name="Smith H.O."/>
            <person name="Venter J.C."/>
        </authorList>
    </citation>
    <scope>NUCLEOTIDE SEQUENCE [LARGE SCALE GENOMIC DNA]</scope>
    <source>
        <strain>ATCC 51907 / DSM 11121 / KW20 / Rd</strain>
    </source>
</reference>
<gene>
    <name evidence="1" type="primary">rnt</name>
    <name type="ordered locus">HI_0324</name>
</gene>
<accession>P44639</accession>
<proteinExistence type="inferred from homology"/>
<protein>
    <recommendedName>
        <fullName evidence="1">Ribonuclease T</fullName>
        <ecNumber evidence="1">3.1.13.-</ecNumber>
    </recommendedName>
    <alternativeName>
        <fullName evidence="1">Exoribonuclease T</fullName>
        <shortName evidence="1">RNase T</shortName>
    </alternativeName>
</protein>
<comment type="function">
    <text evidence="1">Trims short 3' overhangs of a variety of RNA species, leaving a one or two nucleotide 3' overhang. Responsible for the end-turnover of tRNA: specifically removes the terminal AMP residue from uncharged tRNA (tRNA-C-C-A). Also appears to be involved in tRNA biosynthesis.</text>
</comment>
<comment type="cofactor">
    <cofactor evidence="1">
        <name>Mg(2+)</name>
        <dbReference type="ChEBI" id="CHEBI:18420"/>
    </cofactor>
    <text evidence="1">Binds two Mg(2+) per subunit. The active form of the enzyme binds two Mg(2+) ions in its active site. The first Mg(2+) forms only one salt bridge with the protein.</text>
</comment>
<comment type="subunit">
    <text evidence="1">Homodimer.</text>
</comment>
<comment type="similarity">
    <text evidence="1">Belongs to the RNase T family.</text>
</comment>
<sequence>MSDSQEIPYHNQLKNRFRGYFPVIIDVETAGFDAKKDALLELAAITLKMDENGYLHPDQKCHFHIKPFEGANINPESLKFNGIDIHNPLRGAVSELDAITGLFQMVRRGQKDADCQRSIIVAHNAAFDQSFVMAAAERTGVKRNPFHPFGMFDTASLAGLMFGQTVLVKACQAAKIPFDGKQAHSALYDTERTAKLFCYMVNHLKDLGGFPHIASELEQEKTTEKETAL</sequence>
<dbReference type="EC" id="3.1.13.-" evidence="1"/>
<dbReference type="EMBL" id="L42023">
    <property type="protein sequence ID" value="AAC21987.1"/>
    <property type="molecule type" value="Genomic_DNA"/>
</dbReference>
<dbReference type="PIR" id="H64061">
    <property type="entry name" value="H64061"/>
</dbReference>
<dbReference type="RefSeq" id="NP_438489.1">
    <property type="nucleotide sequence ID" value="NC_000907.1"/>
</dbReference>
<dbReference type="SMR" id="P44639"/>
<dbReference type="STRING" id="71421.HI_0324"/>
<dbReference type="EnsemblBacteria" id="AAC21987">
    <property type="protein sequence ID" value="AAC21987"/>
    <property type="gene ID" value="HI_0324"/>
</dbReference>
<dbReference type="KEGG" id="hin:HI_0324"/>
<dbReference type="PATRIC" id="fig|71421.8.peg.341"/>
<dbReference type="eggNOG" id="COG0847">
    <property type="taxonomic scope" value="Bacteria"/>
</dbReference>
<dbReference type="HOGENOM" id="CLU_082724_0_0_6"/>
<dbReference type="OrthoDB" id="9778264at2"/>
<dbReference type="PhylomeDB" id="P44639"/>
<dbReference type="BioCyc" id="HINF71421:G1GJ1-340-MONOMER"/>
<dbReference type="Proteomes" id="UP000000579">
    <property type="component" value="Chromosome"/>
</dbReference>
<dbReference type="GO" id="GO:0005829">
    <property type="term" value="C:cytosol"/>
    <property type="evidence" value="ECO:0000318"/>
    <property type="project" value="GO_Central"/>
</dbReference>
<dbReference type="GO" id="GO:0008408">
    <property type="term" value="F:3'-5' exonuclease activity"/>
    <property type="evidence" value="ECO:0000318"/>
    <property type="project" value="GO_Central"/>
</dbReference>
<dbReference type="GO" id="GO:0000287">
    <property type="term" value="F:magnesium ion binding"/>
    <property type="evidence" value="ECO:0007669"/>
    <property type="project" value="UniProtKB-UniRule"/>
</dbReference>
<dbReference type="GO" id="GO:0003676">
    <property type="term" value="F:nucleic acid binding"/>
    <property type="evidence" value="ECO:0007669"/>
    <property type="project" value="InterPro"/>
</dbReference>
<dbReference type="GO" id="GO:0016896">
    <property type="term" value="F:RNA exonuclease activity, producing 5'-phosphomonoesters"/>
    <property type="evidence" value="ECO:0007669"/>
    <property type="project" value="UniProtKB-UniRule"/>
</dbReference>
<dbReference type="GO" id="GO:0045004">
    <property type="term" value="P:DNA replication proofreading"/>
    <property type="evidence" value="ECO:0000318"/>
    <property type="project" value="GO_Central"/>
</dbReference>
<dbReference type="GO" id="GO:0008033">
    <property type="term" value="P:tRNA processing"/>
    <property type="evidence" value="ECO:0007669"/>
    <property type="project" value="UniProtKB-KW"/>
</dbReference>
<dbReference type="CDD" id="cd06134">
    <property type="entry name" value="RNaseT"/>
    <property type="match status" value="1"/>
</dbReference>
<dbReference type="FunFam" id="3.30.420.10:FF:000009">
    <property type="entry name" value="Ribonuclease T"/>
    <property type="match status" value="1"/>
</dbReference>
<dbReference type="Gene3D" id="3.30.420.10">
    <property type="entry name" value="Ribonuclease H-like superfamily/Ribonuclease H"/>
    <property type="match status" value="1"/>
</dbReference>
<dbReference type="HAMAP" id="MF_00157">
    <property type="entry name" value="RNase_T"/>
    <property type="match status" value="1"/>
</dbReference>
<dbReference type="InterPro" id="IPR013520">
    <property type="entry name" value="Exonuclease_RNaseT/DNA_pol3"/>
</dbReference>
<dbReference type="InterPro" id="IPR005987">
    <property type="entry name" value="RNase_T"/>
</dbReference>
<dbReference type="InterPro" id="IPR012337">
    <property type="entry name" value="RNaseH-like_sf"/>
</dbReference>
<dbReference type="InterPro" id="IPR036397">
    <property type="entry name" value="RNaseH_sf"/>
</dbReference>
<dbReference type="NCBIfam" id="TIGR01298">
    <property type="entry name" value="RNaseT"/>
    <property type="match status" value="1"/>
</dbReference>
<dbReference type="PANTHER" id="PTHR30231">
    <property type="entry name" value="DNA POLYMERASE III SUBUNIT EPSILON"/>
    <property type="match status" value="1"/>
</dbReference>
<dbReference type="PANTHER" id="PTHR30231:SF2">
    <property type="entry name" value="RIBONUCLEASE T"/>
    <property type="match status" value="1"/>
</dbReference>
<dbReference type="Pfam" id="PF00929">
    <property type="entry name" value="RNase_T"/>
    <property type="match status" value="1"/>
</dbReference>
<dbReference type="SMART" id="SM00479">
    <property type="entry name" value="EXOIII"/>
    <property type="match status" value="1"/>
</dbReference>
<dbReference type="SUPFAM" id="SSF53098">
    <property type="entry name" value="Ribonuclease H-like"/>
    <property type="match status" value="1"/>
</dbReference>